<protein>
    <recommendedName>
        <fullName evidence="1">Acetyl-coenzyme A carboxylase carboxyl transferase subunit beta</fullName>
        <shortName evidence="1">ACCase subunit beta</shortName>
        <shortName evidence="1">Acetyl-CoA carboxylase carboxyltransferase subunit beta</shortName>
        <ecNumber evidence="1">2.1.3.15</ecNumber>
    </recommendedName>
</protein>
<gene>
    <name evidence="1" type="primary">accD</name>
    <name type="ordered locus">SSU98_1802</name>
</gene>
<reference key="1">
    <citation type="journal article" date="2007" name="PLoS ONE">
        <title>A glimpse of streptococcal toxic shock syndrome from comparative genomics of S. suis 2 Chinese isolates.</title>
        <authorList>
            <person name="Chen C."/>
            <person name="Tang J."/>
            <person name="Dong W."/>
            <person name="Wang C."/>
            <person name="Feng Y."/>
            <person name="Wang J."/>
            <person name="Zheng F."/>
            <person name="Pan X."/>
            <person name="Liu D."/>
            <person name="Li M."/>
            <person name="Song Y."/>
            <person name="Zhu X."/>
            <person name="Sun H."/>
            <person name="Feng T."/>
            <person name="Guo Z."/>
            <person name="Ju A."/>
            <person name="Ge J."/>
            <person name="Dong Y."/>
            <person name="Sun W."/>
            <person name="Jiang Y."/>
            <person name="Wang J."/>
            <person name="Yan J."/>
            <person name="Yang H."/>
            <person name="Wang X."/>
            <person name="Gao G.F."/>
            <person name="Yang R."/>
            <person name="Wang J."/>
            <person name="Yu J."/>
        </authorList>
    </citation>
    <scope>NUCLEOTIDE SEQUENCE [LARGE SCALE GENOMIC DNA]</scope>
    <source>
        <strain>98HAH33</strain>
    </source>
</reference>
<keyword id="KW-0067">ATP-binding</keyword>
<keyword id="KW-0963">Cytoplasm</keyword>
<keyword id="KW-0275">Fatty acid biosynthesis</keyword>
<keyword id="KW-0276">Fatty acid metabolism</keyword>
<keyword id="KW-0444">Lipid biosynthesis</keyword>
<keyword id="KW-0443">Lipid metabolism</keyword>
<keyword id="KW-0479">Metal-binding</keyword>
<keyword id="KW-0547">Nucleotide-binding</keyword>
<keyword id="KW-0808">Transferase</keyword>
<keyword id="KW-0862">Zinc</keyword>
<keyword id="KW-0863">Zinc-finger</keyword>
<sequence>MALFRKKDKYIRINPNRSRIESAPQAKPEVPDELFSKCPACKVILYKNDLGLEKTCQHCSYNFRITAQERRALTVDEGSFEELFTGIETTNPLDFPNYLEKLAATRQKTGLDEAVLTGKATIGGQPVALGIMDSHFIMASMGTVVGEKITRLFELAIEERLPVVLFTASGGARMQEGIMSLMQMAKISAAVKRHSNAGLFYLTVLTDPTTGGVTASFAMEGDIILAEPQTLVGFAGRRVIESTVRENLPDDFQKAEFLQEHGFVDAIVKRQDLPATISRLLRMHGGVR</sequence>
<comment type="function">
    <text evidence="1">Component of the acetyl coenzyme A carboxylase (ACC) complex. Biotin carboxylase (BC) catalyzes the carboxylation of biotin on its carrier protein (BCCP) and then the CO(2) group is transferred by the transcarboxylase to acetyl-CoA to form malonyl-CoA.</text>
</comment>
<comment type="catalytic activity">
    <reaction evidence="1">
        <text>N(6)-carboxybiotinyl-L-lysyl-[protein] + acetyl-CoA = N(6)-biotinyl-L-lysyl-[protein] + malonyl-CoA</text>
        <dbReference type="Rhea" id="RHEA:54728"/>
        <dbReference type="Rhea" id="RHEA-COMP:10505"/>
        <dbReference type="Rhea" id="RHEA-COMP:10506"/>
        <dbReference type="ChEBI" id="CHEBI:57288"/>
        <dbReference type="ChEBI" id="CHEBI:57384"/>
        <dbReference type="ChEBI" id="CHEBI:83144"/>
        <dbReference type="ChEBI" id="CHEBI:83145"/>
        <dbReference type="EC" id="2.1.3.15"/>
    </reaction>
</comment>
<comment type="cofactor">
    <cofactor evidence="1">
        <name>Zn(2+)</name>
        <dbReference type="ChEBI" id="CHEBI:29105"/>
    </cofactor>
    <text evidence="1">Binds 1 zinc ion per subunit.</text>
</comment>
<comment type="pathway">
    <text evidence="1">Lipid metabolism; malonyl-CoA biosynthesis; malonyl-CoA from acetyl-CoA: step 1/1.</text>
</comment>
<comment type="subunit">
    <text evidence="1">Acetyl-CoA carboxylase is a heterohexamer composed of biotin carboxyl carrier protein (AccB), biotin carboxylase (AccC) and two subunits each of ACCase subunit alpha (AccA) and ACCase subunit beta (AccD).</text>
</comment>
<comment type="subcellular location">
    <subcellularLocation>
        <location evidence="1">Cytoplasm</location>
    </subcellularLocation>
</comment>
<comment type="similarity">
    <text evidence="1">Belongs to the AccD/PCCB family.</text>
</comment>
<dbReference type="EC" id="2.1.3.15" evidence="1"/>
<dbReference type="EMBL" id="CP000408">
    <property type="protein sequence ID" value="ABP92960.1"/>
    <property type="molecule type" value="Genomic_DNA"/>
</dbReference>
<dbReference type="SMR" id="A4W3M1"/>
<dbReference type="KEGG" id="ssv:SSU98_1802"/>
<dbReference type="HOGENOM" id="CLU_015486_1_1_9"/>
<dbReference type="UniPathway" id="UPA00655">
    <property type="reaction ID" value="UER00711"/>
</dbReference>
<dbReference type="GO" id="GO:0009317">
    <property type="term" value="C:acetyl-CoA carboxylase complex"/>
    <property type="evidence" value="ECO:0007669"/>
    <property type="project" value="InterPro"/>
</dbReference>
<dbReference type="GO" id="GO:0003989">
    <property type="term" value="F:acetyl-CoA carboxylase activity"/>
    <property type="evidence" value="ECO:0007669"/>
    <property type="project" value="InterPro"/>
</dbReference>
<dbReference type="GO" id="GO:0005524">
    <property type="term" value="F:ATP binding"/>
    <property type="evidence" value="ECO:0007669"/>
    <property type="project" value="UniProtKB-KW"/>
</dbReference>
<dbReference type="GO" id="GO:0016743">
    <property type="term" value="F:carboxyl- or carbamoyltransferase activity"/>
    <property type="evidence" value="ECO:0007669"/>
    <property type="project" value="UniProtKB-UniRule"/>
</dbReference>
<dbReference type="GO" id="GO:0008270">
    <property type="term" value="F:zinc ion binding"/>
    <property type="evidence" value="ECO:0007669"/>
    <property type="project" value="UniProtKB-UniRule"/>
</dbReference>
<dbReference type="GO" id="GO:0006633">
    <property type="term" value="P:fatty acid biosynthetic process"/>
    <property type="evidence" value="ECO:0007669"/>
    <property type="project" value="UniProtKB-KW"/>
</dbReference>
<dbReference type="GO" id="GO:2001295">
    <property type="term" value="P:malonyl-CoA biosynthetic process"/>
    <property type="evidence" value="ECO:0007669"/>
    <property type="project" value="UniProtKB-UniRule"/>
</dbReference>
<dbReference type="Gene3D" id="3.90.226.10">
    <property type="entry name" value="2-enoyl-CoA Hydratase, Chain A, domain 1"/>
    <property type="match status" value="1"/>
</dbReference>
<dbReference type="HAMAP" id="MF_01395">
    <property type="entry name" value="AcetylCoA_CT_beta"/>
    <property type="match status" value="1"/>
</dbReference>
<dbReference type="InterPro" id="IPR034733">
    <property type="entry name" value="AcCoA_carboxyl_beta"/>
</dbReference>
<dbReference type="InterPro" id="IPR000438">
    <property type="entry name" value="Acetyl_CoA_COase_Trfase_b_su"/>
</dbReference>
<dbReference type="InterPro" id="IPR029045">
    <property type="entry name" value="ClpP/crotonase-like_dom_sf"/>
</dbReference>
<dbReference type="InterPro" id="IPR011762">
    <property type="entry name" value="COA_CT_N"/>
</dbReference>
<dbReference type="NCBIfam" id="TIGR00515">
    <property type="entry name" value="accD"/>
    <property type="match status" value="1"/>
</dbReference>
<dbReference type="PANTHER" id="PTHR42995">
    <property type="entry name" value="ACETYL-COENZYME A CARBOXYLASE CARBOXYL TRANSFERASE SUBUNIT BETA, CHLOROPLASTIC"/>
    <property type="match status" value="1"/>
</dbReference>
<dbReference type="PANTHER" id="PTHR42995:SF5">
    <property type="entry name" value="ACETYL-COENZYME A CARBOXYLASE CARBOXYL TRANSFERASE SUBUNIT BETA, CHLOROPLASTIC"/>
    <property type="match status" value="1"/>
</dbReference>
<dbReference type="Pfam" id="PF01039">
    <property type="entry name" value="Carboxyl_trans"/>
    <property type="match status" value="1"/>
</dbReference>
<dbReference type="PRINTS" id="PR01070">
    <property type="entry name" value="ACCCTRFRASEB"/>
</dbReference>
<dbReference type="SUPFAM" id="SSF52096">
    <property type="entry name" value="ClpP/crotonase"/>
    <property type="match status" value="1"/>
</dbReference>
<dbReference type="PROSITE" id="PS50980">
    <property type="entry name" value="COA_CT_NTER"/>
    <property type="match status" value="1"/>
</dbReference>
<feature type="chain" id="PRO_0000389885" description="Acetyl-coenzyme A carboxylase carboxyl transferase subunit beta">
    <location>
        <begin position="1"/>
        <end position="288"/>
    </location>
</feature>
<feature type="domain" description="CoA carboxyltransferase N-terminal" evidence="2">
    <location>
        <begin position="34"/>
        <end position="288"/>
    </location>
</feature>
<feature type="zinc finger region" description="C4-type" evidence="1">
    <location>
        <begin position="38"/>
        <end position="59"/>
    </location>
</feature>
<feature type="binding site" evidence="1">
    <location>
        <position position="38"/>
    </location>
    <ligand>
        <name>Zn(2+)</name>
        <dbReference type="ChEBI" id="CHEBI:29105"/>
    </ligand>
</feature>
<feature type="binding site" evidence="1">
    <location>
        <position position="41"/>
    </location>
    <ligand>
        <name>Zn(2+)</name>
        <dbReference type="ChEBI" id="CHEBI:29105"/>
    </ligand>
</feature>
<feature type="binding site" evidence="1">
    <location>
        <position position="56"/>
    </location>
    <ligand>
        <name>Zn(2+)</name>
        <dbReference type="ChEBI" id="CHEBI:29105"/>
    </ligand>
</feature>
<feature type="binding site" evidence="1">
    <location>
        <position position="59"/>
    </location>
    <ligand>
        <name>Zn(2+)</name>
        <dbReference type="ChEBI" id="CHEBI:29105"/>
    </ligand>
</feature>
<name>ACCD_STRS2</name>
<organism>
    <name type="scientific">Streptococcus suis (strain 98HAH33)</name>
    <dbReference type="NCBI Taxonomy" id="391296"/>
    <lineage>
        <taxon>Bacteria</taxon>
        <taxon>Bacillati</taxon>
        <taxon>Bacillota</taxon>
        <taxon>Bacilli</taxon>
        <taxon>Lactobacillales</taxon>
        <taxon>Streptococcaceae</taxon>
        <taxon>Streptococcus</taxon>
    </lineage>
</organism>
<proteinExistence type="inferred from homology"/>
<evidence type="ECO:0000255" key="1">
    <source>
        <dbReference type="HAMAP-Rule" id="MF_01395"/>
    </source>
</evidence>
<evidence type="ECO:0000255" key="2">
    <source>
        <dbReference type="PROSITE-ProRule" id="PRU01136"/>
    </source>
</evidence>
<accession>A4W3M1</accession>